<reference key="1">
    <citation type="journal article" date="2009" name="Genome Res.">
        <title>Newly introduced genomic prophage islands are critical determinants of in vivo competitiveness in the Liverpool epidemic strain of Pseudomonas aeruginosa.</title>
        <authorList>
            <person name="Winstanley C."/>
            <person name="Langille M.G.I."/>
            <person name="Fothergill J.L."/>
            <person name="Kukavica-Ibrulj I."/>
            <person name="Paradis-Bleau C."/>
            <person name="Sanschagrin F."/>
            <person name="Thomson N.R."/>
            <person name="Winsor G.L."/>
            <person name="Quail M.A."/>
            <person name="Lennard N."/>
            <person name="Bignell A."/>
            <person name="Clarke L."/>
            <person name="Seeger K."/>
            <person name="Saunders D."/>
            <person name="Harris D."/>
            <person name="Parkhill J."/>
            <person name="Hancock R.E.W."/>
            <person name="Brinkman F.S.L."/>
            <person name="Levesque R.C."/>
        </authorList>
    </citation>
    <scope>NUCLEOTIDE SEQUENCE [LARGE SCALE GENOMIC DNA]</scope>
    <source>
        <strain>LESB58</strain>
    </source>
</reference>
<evidence type="ECO:0000255" key="1">
    <source>
        <dbReference type="HAMAP-Rule" id="MF_01331"/>
    </source>
</evidence>
<evidence type="ECO:0000305" key="2"/>
<comment type="function">
    <text evidence="1">This protein binds specifically to 23S rRNA; its binding is stimulated by other ribosomal proteins, e.g. L4, L17, and L20. It is important during the early stages of 50S assembly. It makes multiple contacts with different domains of the 23S rRNA in the assembled 50S subunit and ribosome (By similarity).</text>
</comment>
<comment type="function">
    <text evidence="1">The globular domain of the protein is located near the polypeptide exit tunnel on the outside of the subunit, while an extended beta-hairpin is found that lines the wall of the exit tunnel in the center of the 70S ribosome.</text>
</comment>
<comment type="subunit">
    <text evidence="1">Part of the 50S ribosomal subunit.</text>
</comment>
<comment type="similarity">
    <text evidence="1">Belongs to the universal ribosomal protein uL22 family.</text>
</comment>
<gene>
    <name evidence="1" type="primary">rplV</name>
    <name type="ordered locus">PLES_06701</name>
</gene>
<feature type="chain" id="PRO_1000142296" description="Large ribosomal subunit protein uL22">
    <location>
        <begin position="1"/>
        <end position="110"/>
    </location>
</feature>
<accession>B7V649</accession>
<name>RL22_PSEA8</name>
<proteinExistence type="inferred from homology"/>
<organism>
    <name type="scientific">Pseudomonas aeruginosa (strain LESB58)</name>
    <dbReference type="NCBI Taxonomy" id="557722"/>
    <lineage>
        <taxon>Bacteria</taxon>
        <taxon>Pseudomonadati</taxon>
        <taxon>Pseudomonadota</taxon>
        <taxon>Gammaproteobacteria</taxon>
        <taxon>Pseudomonadales</taxon>
        <taxon>Pseudomonadaceae</taxon>
        <taxon>Pseudomonas</taxon>
    </lineage>
</organism>
<protein>
    <recommendedName>
        <fullName evidence="1">Large ribosomal subunit protein uL22</fullName>
    </recommendedName>
    <alternativeName>
        <fullName evidence="2">50S ribosomal protein L22</fullName>
    </alternativeName>
</protein>
<keyword id="KW-0687">Ribonucleoprotein</keyword>
<keyword id="KW-0689">Ribosomal protein</keyword>
<keyword id="KW-0694">RNA-binding</keyword>
<keyword id="KW-0699">rRNA-binding</keyword>
<dbReference type="EMBL" id="FM209186">
    <property type="protein sequence ID" value="CAW25397.1"/>
    <property type="molecule type" value="Genomic_DNA"/>
</dbReference>
<dbReference type="RefSeq" id="WP_003103908.1">
    <property type="nucleotide sequence ID" value="NC_011770.1"/>
</dbReference>
<dbReference type="SMR" id="B7V649"/>
<dbReference type="GeneID" id="98636788"/>
<dbReference type="KEGG" id="pag:PLES_06701"/>
<dbReference type="HOGENOM" id="CLU_083987_3_3_6"/>
<dbReference type="GO" id="GO:0022625">
    <property type="term" value="C:cytosolic large ribosomal subunit"/>
    <property type="evidence" value="ECO:0007669"/>
    <property type="project" value="TreeGrafter"/>
</dbReference>
<dbReference type="GO" id="GO:0019843">
    <property type="term" value="F:rRNA binding"/>
    <property type="evidence" value="ECO:0007669"/>
    <property type="project" value="UniProtKB-UniRule"/>
</dbReference>
<dbReference type="GO" id="GO:0003735">
    <property type="term" value="F:structural constituent of ribosome"/>
    <property type="evidence" value="ECO:0007669"/>
    <property type="project" value="InterPro"/>
</dbReference>
<dbReference type="GO" id="GO:0006412">
    <property type="term" value="P:translation"/>
    <property type="evidence" value="ECO:0007669"/>
    <property type="project" value="UniProtKB-UniRule"/>
</dbReference>
<dbReference type="CDD" id="cd00336">
    <property type="entry name" value="Ribosomal_L22"/>
    <property type="match status" value="1"/>
</dbReference>
<dbReference type="FunFam" id="3.90.470.10:FF:000001">
    <property type="entry name" value="50S ribosomal protein L22"/>
    <property type="match status" value="1"/>
</dbReference>
<dbReference type="Gene3D" id="3.90.470.10">
    <property type="entry name" value="Ribosomal protein L22/L17"/>
    <property type="match status" value="1"/>
</dbReference>
<dbReference type="HAMAP" id="MF_01331_B">
    <property type="entry name" value="Ribosomal_uL22_B"/>
    <property type="match status" value="1"/>
</dbReference>
<dbReference type="InterPro" id="IPR001063">
    <property type="entry name" value="Ribosomal_uL22"/>
</dbReference>
<dbReference type="InterPro" id="IPR005727">
    <property type="entry name" value="Ribosomal_uL22_bac/chlpt-type"/>
</dbReference>
<dbReference type="InterPro" id="IPR047867">
    <property type="entry name" value="Ribosomal_uL22_bac/org-type"/>
</dbReference>
<dbReference type="InterPro" id="IPR018260">
    <property type="entry name" value="Ribosomal_uL22_CS"/>
</dbReference>
<dbReference type="InterPro" id="IPR036394">
    <property type="entry name" value="Ribosomal_uL22_sf"/>
</dbReference>
<dbReference type="NCBIfam" id="TIGR01044">
    <property type="entry name" value="rplV_bact"/>
    <property type="match status" value="1"/>
</dbReference>
<dbReference type="PANTHER" id="PTHR13501">
    <property type="entry name" value="CHLOROPLAST 50S RIBOSOMAL PROTEIN L22-RELATED"/>
    <property type="match status" value="1"/>
</dbReference>
<dbReference type="PANTHER" id="PTHR13501:SF8">
    <property type="entry name" value="LARGE RIBOSOMAL SUBUNIT PROTEIN UL22M"/>
    <property type="match status" value="1"/>
</dbReference>
<dbReference type="Pfam" id="PF00237">
    <property type="entry name" value="Ribosomal_L22"/>
    <property type="match status" value="1"/>
</dbReference>
<dbReference type="SUPFAM" id="SSF54843">
    <property type="entry name" value="Ribosomal protein L22"/>
    <property type="match status" value="1"/>
</dbReference>
<dbReference type="PROSITE" id="PS00464">
    <property type="entry name" value="RIBOSOMAL_L22"/>
    <property type="match status" value="1"/>
</dbReference>
<sequence>MEVAAKLSGARISAQKARLVADQIRGKKVGEALNLLAFSSKKAAEIMKKVLESAVANAEHNEGADVDDLKVSTVFVNEGRSLKRIMPRAKGRADRIVKRSCHITVKVADK</sequence>